<proteinExistence type="inferred from homology"/>
<gene>
    <name type="ordered locus">Atu1478</name>
    <name type="ORF">AGR_C_2726</name>
</gene>
<keyword id="KW-1185">Reference proteome</keyword>
<protein>
    <recommendedName>
        <fullName evidence="1">UPF0178 protein Atu1478</fullName>
    </recommendedName>
</protein>
<evidence type="ECO:0000255" key="1">
    <source>
        <dbReference type="HAMAP-Rule" id="MF_00489"/>
    </source>
</evidence>
<evidence type="ECO:0000305" key="2"/>
<name>Y1478_AGRFC</name>
<dbReference type="EMBL" id="AE007869">
    <property type="protein sequence ID" value="AAK87268.2"/>
    <property type="status" value="ALT_INIT"/>
    <property type="molecule type" value="Genomic_DNA"/>
</dbReference>
<dbReference type="PIR" id="AF2758">
    <property type="entry name" value="AF2758"/>
</dbReference>
<dbReference type="PIR" id="C97539">
    <property type="entry name" value="C97539"/>
</dbReference>
<dbReference type="RefSeq" id="NP_354483.2">
    <property type="nucleotide sequence ID" value="NC_003062.2"/>
</dbReference>
<dbReference type="STRING" id="176299.Atu1478"/>
<dbReference type="EnsemblBacteria" id="AAK87268">
    <property type="protein sequence ID" value="AAK87268"/>
    <property type="gene ID" value="Atu1478"/>
</dbReference>
<dbReference type="KEGG" id="atu:Atu1478"/>
<dbReference type="PATRIC" id="fig|176299.10.peg.1502"/>
<dbReference type="eggNOG" id="COG1671">
    <property type="taxonomic scope" value="Bacteria"/>
</dbReference>
<dbReference type="HOGENOM" id="CLU_106619_2_1_5"/>
<dbReference type="OrthoDB" id="9798918at2"/>
<dbReference type="Proteomes" id="UP000000813">
    <property type="component" value="Chromosome circular"/>
</dbReference>
<dbReference type="CDD" id="cd18720">
    <property type="entry name" value="PIN_YqxD-like"/>
    <property type="match status" value="1"/>
</dbReference>
<dbReference type="HAMAP" id="MF_00489">
    <property type="entry name" value="UPF0178"/>
    <property type="match status" value="1"/>
</dbReference>
<dbReference type="InterPro" id="IPR003791">
    <property type="entry name" value="UPF0178"/>
</dbReference>
<dbReference type="NCBIfam" id="NF001095">
    <property type="entry name" value="PRK00124.1"/>
    <property type="match status" value="1"/>
</dbReference>
<dbReference type="PANTHER" id="PTHR35146">
    <property type="entry name" value="UPF0178 PROTEIN YAII"/>
    <property type="match status" value="1"/>
</dbReference>
<dbReference type="PANTHER" id="PTHR35146:SF1">
    <property type="entry name" value="UPF0178 PROTEIN YAII"/>
    <property type="match status" value="1"/>
</dbReference>
<dbReference type="Pfam" id="PF02639">
    <property type="entry name" value="DUF188"/>
    <property type="match status" value="1"/>
</dbReference>
<organism>
    <name type="scientific">Agrobacterium fabrum (strain C58 / ATCC 33970)</name>
    <name type="common">Agrobacterium tumefaciens (strain C58)</name>
    <dbReference type="NCBI Taxonomy" id="176299"/>
    <lineage>
        <taxon>Bacteria</taxon>
        <taxon>Pseudomonadati</taxon>
        <taxon>Pseudomonadota</taxon>
        <taxon>Alphaproteobacteria</taxon>
        <taxon>Hyphomicrobiales</taxon>
        <taxon>Rhizobiaceae</taxon>
        <taxon>Rhizobium/Agrobacterium group</taxon>
        <taxon>Agrobacterium</taxon>
        <taxon>Agrobacterium tumefaciens complex</taxon>
    </lineage>
</organism>
<sequence>MLMPQNPQIYVDADACPVKPEILKVAERHGLEVTFVANSGLRPSRDPMVKNVIVSAGFDAADDWIAERAAENDIVITADVPLAGRCVAKGALVTGPTGRVFDPSNIGMATAMRDLGAHLRETGESKGYNAAFSPRDRSAFLETLDRFCRRVKK</sequence>
<feature type="chain" id="PRO_0000175953" description="UPF0178 protein Atu1478">
    <location>
        <begin position="1"/>
        <end position="153"/>
    </location>
</feature>
<comment type="similarity">
    <text evidence="1">Belongs to the UPF0178 family.</text>
</comment>
<comment type="sequence caution" evidence="2">
    <conflict type="erroneous initiation">
        <sequence resource="EMBL-CDS" id="AAK87268"/>
    </conflict>
</comment>
<accession>Q8UFC0</accession>
<reference key="1">
    <citation type="journal article" date="2001" name="Science">
        <title>The genome of the natural genetic engineer Agrobacterium tumefaciens C58.</title>
        <authorList>
            <person name="Wood D.W."/>
            <person name="Setubal J.C."/>
            <person name="Kaul R."/>
            <person name="Monks D.E."/>
            <person name="Kitajima J.P."/>
            <person name="Okura V.K."/>
            <person name="Zhou Y."/>
            <person name="Chen L."/>
            <person name="Wood G.E."/>
            <person name="Almeida N.F. Jr."/>
            <person name="Woo L."/>
            <person name="Chen Y."/>
            <person name="Paulsen I.T."/>
            <person name="Eisen J.A."/>
            <person name="Karp P.D."/>
            <person name="Bovee D. Sr."/>
            <person name="Chapman P."/>
            <person name="Clendenning J."/>
            <person name="Deatherage G."/>
            <person name="Gillet W."/>
            <person name="Grant C."/>
            <person name="Kutyavin T."/>
            <person name="Levy R."/>
            <person name="Li M.-J."/>
            <person name="McClelland E."/>
            <person name="Palmieri A."/>
            <person name="Raymond C."/>
            <person name="Rouse G."/>
            <person name="Saenphimmachak C."/>
            <person name="Wu Z."/>
            <person name="Romero P."/>
            <person name="Gordon D."/>
            <person name="Zhang S."/>
            <person name="Yoo H."/>
            <person name="Tao Y."/>
            <person name="Biddle P."/>
            <person name="Jung M."/>
            <person name="Krespan W."/>
            <person name="Perry M."/>
            <person name="Gordon-Kamm B."/>
            <person name="Liao L."/>
            <person name="Kim S."/>
            <person name="Hendrick C."/>
            <person name="Zhao Z.-Y."/>
            <person name="Dolan M."/>
            <person name="Chumley F."/>
            <person name="Tingey S.V."/>
            <person name="Tomb J.-F."/>
            <person name="Gordon M.P."/>
            <person name="Olson M.V."/>
            <person name="Nester E.W."/>
        </authorList>
    </citation>
    <scope>NUCLEOTIDE SEQUENCE [LARGE SCALE GENOMIC DNA]</scope>
    <source>
        <strain>C58 / ATCC 33970</strain>
    </source>
</reference>
<reference key="2">
    <citation type="journal article" date="2001" name="Science">
        <title>Genome sequence of the plant pathogen and biotechnology agent Agrobacterium tumefaciens C58.</title>
        <authorList>
            <person name="Goodner B."/>
            <person name="Hinkle G."/>
            <person name="Gattung S."/>
            <person name="Miller N."/>
            <person name="Blanchard M."/>
            <person name="Qurollo B."/>
            <person name="Goldman B.S."/>
            <person name="Cao Y."/>
            <person name="Askenazi M."/>
            <person name="Halling C."/>
            <person name="Mullin L."/>
            <person name="Houmiel K."/>
            <person name="Gordon J."/>
            <person name="Vaudin M."/>
            <person name="Iartchouk O."/>
            <person name="Epp A."/>
            <person name="Liu F."/>
            <person name="Wollam C."/>
            <person name="Allinger M."/>
            <person name="Doughty D."/>
            <person name="Scott C."/>
            <person name="Lappas C."/>
            <person name="Markelz B."/>
            <person name="Flanagan C."/>
            <person name="Crowell C."/>
            <person name="Gurson J."/>
            <person name="Lomo C."/>
            <person name="Sear C."/>
            <person name="Strub G."/>
            <person name="Cielo C."/>
            <person name="Slater S."/>
        </authorList>
    </citation>
    <scope>NUCLEOTIDE SEQUENCE [LARGE SCALE GENOMIC DNA]</scope>
    <source>
        <strain>C58 / ATCC 33970</strain>
    </source>
</reference>